<proteinExistence type="evidence at protein level"/>
<protein>
    <recommendedName>
        <fullName>Probable C-mannosyltransferase DPY19L4</fullName>
        <ecNumber>2.4.1.-</ecNumber>
    </recommendedName>
    <alternativeName>
        <fullName>Dpy-19-like protein 4</fullName>
    </alternativeName>
    <alternativeName>
        <fullName>Protein dpy-19 homolog 4</fullName>
    </alternativeName>
</protein>
<dbReference type="EC" id="2.4.1.-"/>
<dbReference type="EMBL" id="AK123618">
    <property type="protein sequence ID" value="BAC85664.1"/>
    <property type="status" value="ALT_INIT"/>
    <property type="molecule type" value="mRNA"/>
</dbReference>
<dbReference type="EMBL" id="AK123682">
    <property type="protein sequence ID" value="BAC85675.1"/>
    <property type="molecule type" value="mRNA"/>
</dbReference>
<dbReference type="EMBL" id="BX538048">
    <property type="protein sequence ID" value="CAD97987.1"/>
    <property type="molecule type" value="mRNA"/>
</dbReference>
<dbReference type="EMBL" id="BX538174">
    <property type="protein sequence ID" value="CAD98049.1"/>
    <property type="molecule type" value="mRNA"/>
</dbReference>
<dbReference type="EMBL" id="CH471060">
    <property type="protein sequence ID" value="EAW91723.1"/>
    <property type="molecule type" value="Genomic_DNA"/>
</dbReference>
<dbReference type="EMBL" id="BC110870">
    <property type="protein sequence ID" value="AAI10871.1"/>
    <property type="molecule type" value="mRNA"/>
</dbReference>
<dbReference type="EMBL" id="BC126193">
    <property type="protein sequence ID" value="AAI26194.1"/>
    <property type="molecule type" value="mRNA"/>
</dbReference>
<dbReference type="EMBL" id="BC130576">
    <property type="protein sequence ID" value="AAI30577.1"/>
    <property type="molecule type" value="mRNA"/>
</dbReference>
<dbReference type="CCDS" id="CCDS34924.1"/>
<dbReference type="RefSeq" id="NP_861452.2">
    <property type="nucleotide sequence ID" value="NM_181787.3"/>
</dbReference>
<dbReference type="SMR" id="Q7Z388"/>
<dbReference type="BioGRID" id="130313">
    <property type="interactions" value="52"/>
</dbReference>
<dbReference type="FunCoup" id="Q7Z388">
    <property type="interactions" value="1016"/>
</dbReference>
<dbReference type="IntAct" id="Q7Z388">
    <property type="interactions" value="40"/>
</dbReference>
<dbReference type="STRING" id="9606.ENSP00000389630"/>
<dbReference type="GlyConnect" id="1627">
    <property type="glycosylation" value="4 N-Linked glycans (2 sites)"/>
</dbReference>
<dbReference type="GlyCosmos" id="Q7Z388">
    <property type="glycosylation" value="2 sites, 4 glycans"/>
</dbReference>
<dbReference type="GlyGen" id="Q7Z388">
    <property type="glycosylation" value="3 sites, 10 N-linked glycans (2 sites)"/>
</dbReference>
<dbReference type="iPTMnet" id="Q7Z388"/>
<dbReference type="PhosphoSitePlus" id="Q7Z388"/>
<dbReference type="BioMuta" id="DPY19L4"/>
<dbReference type="DMDM" id="74713335"/>
<dbReference type="CPTAC" id="CPTAC-1488"/>
<dbReference type="jPOST" id="Q7Z388"/>
<dbReference type="MassIVE" id="Q7Z388"/>
<dbReference type="PaxDb" id="9606-ENSP00000389630"/>
<dbReference type="PeptideAtlas" id="Q7Z388"/>
<dbReference type="ProteomicsDB" id="69011"/>
<dbReference type="Antibodypedia" id="25883">
    <property type="antibodies" value="99 antibodies from 15 providers"/>
</dbReference>
<dbReference type="DNASU" id="286148"/>
<dbReference type="Ensembl" id="ENST00000414645.6">
    <property type="protein sequence ID" value="ENSP00000389630.2"/>
    <property type="gene ID" value="ENSG00000156162.16"/>
</dbReference>
<dbReference type="GeneID" id="286148"/>
<dbReference type="KEGG" id="hsa:286148"/>
<dbReference type="MANE-Select" id="ENST00000414645.6">
    <property type="protein sequence ID" value="ENSP00000389630.2"/>
    <property type="RefSeq nucleotide sequence ID" value="NM_181787.3"/>
    <property type="RefSeq protein sequence ID" value="NP_861452.2"/>
</dbReference>
<dbReference type="UCSC" id="uc003ygx.3">
    <property type="organism name" value="human"/>
</dbReference>
<dbReference type="AGR" id="HGNC:27829"/>
<dbReference type="CTD" id="286148"/>
<dbReference type="DisGeNET" id="286148"/>
<dbReference type="GeneCards" id="DPY19L4"/>
<dbReference type="HGNC" id="HGNC:27829">
    <property type="gene designation" value="DPY19L4"/>
</dbReference>
<dbReference type="HPA" id="ENSG00000156162">
    <property type="expression patterns" value="Low tissue specificity"/>
</dbReference>
<dbReference type="MIM" id="613895">
    <property type="type" value="gene"/>
</dbReference>
<dbReference type="neXtProt" id="NX_Q7Z388"/>
<dbReference type="OpenTargets" id="ENSG00000156162"/>
<dbReference type="PharmGKB" id="PA142671955"/>
<dbReference type="VEuPathDB" id="HostDB:ENSG00000156162"/>
<dbReference type="eggNOG" id="KOG4587">
    <property type="taxonomic scope" value="Eukaryota"/>
</dbReference>
<dbReference type="GeneTree" id="ENSGT00530000063023"/>
<dbReference type="HOGENOM" id="CLU_014404_1_0_1"/>
<dbReference type="InParanoid" id="Q7Z388"/>
<dbReference type="OMA" id="PKYILFQ"/>
<dbReference type="OrthoDB" id="6019623at2759"/>
<dbReference type="PAN-GO" id="Q7Z388">
    <property type="GO annotations" value="3 GO annotations based on evolutionary models"/>
</dbReference>
<dbReference type="PhylomeDB" id="Q7Z388"/>
<dbReference type="TreeFam" id="TF313376"/>
<dbReference type="PathwayCommons" id="Q7Z388"/>
<dbReference type="SignaLink" id="Q7Z388"/>
<dbReference type="BioGRID-ORCS" id="286148">
    <property type="hits" value="26 hits in 1157 CRISPR screens"/>
</dbReference>
<dbReference type="ChiTaRS" id="DPY19L4">
    <property type="organism name" value="human"/>
</dbReference>
<dbReference type="GenomeRNAi" id="286148"/>
<dbReference type="Pharos" id="Q7Z388">
    <property type="development level" value="Tdark"/>
</dbReference>
<dbReference type="PRO" id="PR:Q7Z388"/>
<dbReference type="Proteomes" id="UP000005640">
    <property type="component" value="Chromosome 8"/>
</dbReference>
<dbReference type="RNAct" id="Q7Z388">
    <property type="molecule type" value="protein"/>
</dbReference>
<dbReference type="Bgee" id="ENSG00000156162">
    <property type="expression patterns" value="Expressed in adrenal tissue and 197 other cell types or tissues"/>
</dbReference>
<dbReference type="ExpressionAtlas" id="Q7Z388">
    <property type="expression patterns" value="baseline and differential"/>
</dbReference>
<dbReference type="GO" id="GO:0005789">
    <property type="term" value="C:endoplasmic reticulum membrane"/>
    <property type="evidence" value="ECO:0000318"/>
    <property type="project" value="GO_Central"/>
</dbReference>
<dbReference type="GO" id="GO:0000030">
    <property type="term" value="F:mannosyltransferase activity"/>
    <property type="evidence" value="ECO:0000318"/>
    <property type="project" value="GO_Central"/>
</dbReference>
<dbReference type="CDD" id="cd20180">
    <property type="entry name" value="Dpy19L4"/>
    <property type="match status" value="1"/>
</dbReference>
<dbReference type="InterPro" id="IPR018732">
    <property type="entry name" value="Dpy-19/Dpy-19-like"/>
</dbReference>
<dbReference type="InterPro" id="IPR047464">
    <property type="entry name" value="Dpy19L4"/>
</dbReference>
<dbReference type="PANTHER" id="PTHR31488:SF2">
    <property type="entry name" value="C-MANNOSYLTRANSFERASE DPY19L4-RELATED"/>
    <property type="match status" value="1"/>
</dbReference>
<dbReference type="PANTHER" id="PTHR31488">
    <property type="entry name" value="DPY-19-LIKE 1, LIKE (H. SAPIENS)"/>
    <property type="match status" value="1"/>
</dbReference>
<dbReference type="Pfam" id="PF10034">
    <property type="entry name" value="Dpy19"/>
    <property type="match status" value="1"/>
</dbReference>
<organism>
    <name type="scientific">Homo sapiens</name>
    <name type="common">Human</name>
    <dbReference type="NCBI Taxonomy" id="9606"/>
    <lineage>
        <taxon>Eukaryota</taxon>
        <taxon>Metazoa</taxon>
        <taxon>Chordata</taxon>
        <taxon>Craniata</taxon>
        <taxon>Vertebrata</taxon>
        <taxon>Euteleostomi</taxon>
        <taxon>Mammalia</taxon>
        <taxon>Eutheria</taxon>
        <taxon>Euarchontoglires</taxon>
        <taxon>Primates</taxon>
        <taxon>Haplorrhini</taxon>
        <taxon>Catarrhini</taxon>
        <taxon>Hominidae</taxon>
        <taxon>Homo</taxon>
    </lineage>
</organism>
<name>D19L4_HUMAN</name>
<evidence type="ECO:0000250" key="1"/>
<evidence type="ECO:0000255" key="2"/>
<evidence type="ECO:0000256" key="3">
    <source>
        <dbReference type="SAM" id="MobiDB-lite"/>
    </source>
</evidence>
<evidence type="ECO:0000269" key="4">
    <source>
    </source>
</evidence>
<evidence type="ECO:0000305" key="5"/>
<evidence type="ECO:0007744" key="6">
    <source>
    </source>
</evidence>
<keyword id="KW-0007">Acetylation</keyword>
<keyword id="KW-0328">Glycosyltransferase</keyword>
<keyword id="KW-0472">Membrane</keyword>
<keyword id="KW-1267">Proteomics identification</keyword>
<keyword id="KW-1185">Reference proteome</keyword>
<keyword id="KW-0808">Transferase</keyword>
<keyword id="KW-0812">Transmembrane</keyword>
<keyword id="KW-1133">Transmembrane helix</keyword>
<reference key="1">
    <citation type="journal article" date="2004" name="Nat. Genet.">
        <title>Complete sequencing and characterization of 21,243 full-length human cDNAs.</title>
        <authorList>
            <person name="Ota T."/>
            <person name="Suzuki Y."/>
            <person name="Nishikawa T."/>
            <person name="Otsuki T."/>
            <person name="Sugiyama T."/>
            <person name="Irie R."/>
            <person name="Wakamatsu A."/>
            <person name="Hayashi K."/>
            <person name="Sato H."/>
            <person name="Nagai K."/>
            <person name="Kimura K."/>
            <person name="Makita H."/>
            <person name="Sekine M."/>
            <person name="Obayashi M."/>
            <person name="Nishi T."/>
            <person name="Shibahara T."/>
            <person name="Tanaka T."/>
            <person name="Ishii S."/>
            <person name="Yamamoto J."/>
            <person name="Saito K."/>
            <person name="Kawai Y."/>
            <person name="Isono Y."/>
            <person name="Nakamura Y."/>
            <person name="Nagahari K."/>
            <person name="Murakami K."/>
            <person name="Yasuda T."/>
            <person name="Iwayanagi T."/>
            <person name="Wagatsuma M."/>
            <person name="Shiratori A."/>
            <person name="Sudo H."/>
            <person name="Hosoiri T."/>
            <person name="Kaku Y."/>
            <person name="Kodaira H."/>
            <person name="Kondo H."/>
            <person name="Sugawara M."/>
            <person name="Takahashi M."/>
            <person name="Kanda K."/>
            <person name="Yokoi T."/>
            <person name="Furuya T."/>
            <person name="Kikkawa E."/>
            <person name="Omura Y."/>
            <person name="Abe K."/>
            <person name="Kamihara K."/>
            <person name="Katsuta N."/>
            <person name="Sato K."/>
            <person name="Tanikawa M."/>
            <person name="Yamazaki M."/>
            <person name="Ninomiya K."/>
            <person name="Ishibashi T."/>
            <person name="Yamashita H."/>
            <person name="Murakawa K."/>
            <person name="Fujimori K."/>
            <person name="Tanai H."/>
            <person name="Kimata M."/>
            <person name="Watanabe M."/>
            <person name="Hiraoka S."/>
            <person name="Chiba Y."/>
            <person name="Ishida S."/>
            <person name="Ono Y."/>
            <person name="Takiguchi S."/>
            <person name="Watanabe S."/>
            <person name="Yosida M."/>
            <person name="Hotuta T."/>
            <person name="Kusano J."/>
            <person name="Kanehori K."/>
            <person name="Takahashi-Fujii A."/>
            <person name="Hara H."/>
            <person name="Tanase T.-O."/>
            <person name="Nomura Y."/>
            <person name="Togiya S."/>
            <person name="Komai F."/>
            <person name="Hara R."/>
            <person name="Takeuchi K."/>
            <person name="Arita M."/>
            <person name="Imose N."/>
            <person name="Musashino K."/>
            <person name="Yuuki H."/>
            <person name="Oshima A."/>
            <person name="Sasaki N."/>
            <person name="Aotsuka S."/>
            <person name="Yoshikawa Y."/>
            <person name="Matsunawa H."/>
            <person name="Ichihara T."/>
            <person name="Shiohata N."/>
            <person name="Sano S."/>
            <person name="Moriya S."/>
            <person name="Momiyama H."/>
            <person name="Satoh N."/>
            <person name="Takami S."/>
            <person name="Terashima Y."/>
            <person name="Suzuki O."/>
            <person name="Nakagawa S."/>
            <person name="Senoh A."/>
            <person name="Mizoguchi H."/>
            <person name="Goto Y."/>
            <person name="Shimizu F."/>
            <person name="Wakebe H."/>
            <person name="Hishigaki H."/>
            <person name="Watanabe T."/>
            <person name="Sugiyama A."/>
            <person name="Takemoto M."/>
            <person name="Kawakami B."/>
            <person name="Yamazaki M."/>
            <person name="Watanabe K."/>
            <person name="Kumagai A."/>
            <person name="Itakura S."/>
            <person name="Fukuzumi Y."/>
            <person name="Fujimori Y."/>
            <person name="Komiyama M."/>
            <person name="Tashiro H."/>
            <person name="Tanigami A."/>
            <person name="Fujiwara T."/>
            <person name="Ono T."/>
            <person name="Yamada K."/>
            <person name="Fujii Y."/>
            <person name="Ozaki K."/>
            <person name="Hirao M."/>
            <person name="Ohmori Y."/>
            <person name="Kawabata A."/>
            <person name="Hikiji T."/>
            <person name="Kobatake N."/>
            <person name="Inagaki H."/>
            <person name="Ikema Y."/>
            <person name="Okamoto S."/>
            <person name="Okitani R."/>
            <person name="Kawakami T."/>
            <person name="Noguchi S."/>
            <person name="Itoh T."/>
            <person name="Shigeta K."/>
            <person name="Senba T."/>
            <person name="Matsumura K."/>
            <person name="Nakajima Y."/>
            <person name="Mizuno T."/>
            <person name="Morinaga M."/>
            <person name="Sasaki M."/>
            <person name="Togashi T."/>
            <person name="Oyama M."/>
            <person name="Hata H."/>
            <person name="Watanabe M."/>
            <person name="Komatsu T."/>
            <person name="Mizushima-Sugano J."/>
            <person name="Satoh T."/>
            <person name="Shirai Y."/>
            <person name="Takahashi Y."/>
            <person name="Nakagawa K."/>
            <person name="Okumura K."/>
            <person name="Nagase T."/>
            <person name="Nomura N."/>
            <person name="Kikuchi H."/>
            <person name="Masuho Y."/>
            <person name="Yamashita R."/>
            <person name="Nakai K."/>
            <person name="Yada T."/>
            <person name="Nakamura Y."/>
            <person name="Ohara O."/>
            <person name="Isogai T."/>
            <person name="Sugano S."/>
        </authorList>
    </citation>
    <scope>NUCLEOTIDE SEQUENCE [LARGE SCALE MRNA]</scope>
    <source>
        <tissue>Tongue</tissue>
    </source>
</reference>
<reference key="2">
    <citation type="journal article" date="2007" name="BMC Genomics">
        <title>The full-ORF clone resource of the German cDNA consortium.</title>
        <authorList>
            <person name="Bechtel S."/>
            <person name="Rosenfelder H."/>
            <person name="Duda A."/>
            <person name="Schmidt C.P."/>
            <person name="Ernst U."/>
            <person name="Wellenreuther R."/>
            <person name="Mehrle A."/>
            <person name="Schuster C."/>
            <person name="Bahr A."/>
            <person name="Bloecker H."/>
            <person name="Heubner D."/>
            <person name="Hoerlein A."/>
            <person name="Michel G."/>
            <person name="Wedler H."/>
            <person name="Koehrer K."/>
            <person name="Ottenwaelder B."/>
            <person name="Poustka A."/>
            <person name="Wiemann S."/>
            <person name="Schupp I."/>
        </authorList>
    </citation>
    <scope>NUCLEOTIDE SEQUENCE [LARGE SCALE MRNA]</scope>
    <source>
        <tissue>Colon endothelium</tissue>
        <tissue>Uterus</tissue>
    </source>
</reference>
<reference key="3">
    <citation type="submission" date="2005-07" db="EMBL/GenBank/DDBJ databases">
        <authorList>
            <person name="Mural R.J."/>
            <person name="Istrail S."/>
            <person name="Sutton G.G."/>
            <person name="Florea L."/>
            <person name="Halpern A.L."/>
            <person name="Mobarry C.M."/>
            <person name="Lippert R."/>
            <person name="Walenz B."/>
            <person name="Shatkay H."/>
            <person name="Dew I."/>
            <person name="Miller J.R."/>
            <person name="Flanigan M.J."/>
            <person name="Edwards N.J."/>
            <person name="Bolanos R."/>
            <person name="Fasulo D."/>
            <person name="Halldorsson B.V."/>
            <person name="Hannenhalli S."/>
            <person name="Turner R."/>
            <person name="Yooseph S."/>
            <person name="Lu F."/>
            <person name="Nusskern D.R."/>
            <person name="Shue B.C."/>
            <person name="Zheng X.H."/>
            <person name="Zhong F."/>
            <person name="Delcher A.L."/>
            <person name="Huson D.H."/>
            <person name="Kravitz S.A."/>
            <person name="Mouchard L."/>
            <person name="Reinert K."/>
            <person name="Remington K.A."/>
            <person name="Clark A.G."/>
            <person name="Waterman M.S."/>
            <person name="Eichler E.E."/>
            <person name="Adams M.D."/>
            <person name="Hunkapiller M.W."/>
            <person name="Myers E.W."/>
            <person name="Venter J.C."/>
        </authorList>
    </citation>
    <scope>NUCLEOTIDE SEQUENCE [LARGE SCALE GENOMIC DNA]</scope>
</reference>
<reference key="4">
    <citation type="journal article" date="2004" name="Genome Res.">
        <title>The status, quality, and expansion of the NIH full-length cDNA project: the Mammalian Gene Collection (MGC).</title>
        <authorList>
            <consortium name="The MGC Project Team"/>
        </authorList>
    </citation>
    <scope>NUCLEOTIDE SEQUENCE [LARGE SCALE MRNA]</scope>
    <source>
        <tissue>Eye</tissue>
    </source>
</reference>
<reference key="5">
    <citation type="journal article" date="2006" name="BMC Genomics">
        <title>Duplication and relocation of the functional DPY19L2 gene within low copy repeats.</title>
        <authorList>
            <person name="Carson A.R."/>
            <person name="Cheung J."/>
            <person name="Scherer S.W."/>
        </authorList>
    </citation>
    <scope>TISSUE SPECIFICITY</scope>
</reference>
<reference key="6">
    <citation type="journal article" date="2012" name="Proc. Natl. Acad. Sci. U.S.A.">
        <title>N-terminal acetylome analyses and functional insights of the N-terminal acetyltransferase NatB.</title>
        <authorList>
            <person name="Van Damme P."/>
            <person name="Lasa M."/>
            <person name="Polevoda B."/>
            <person name="Gazquez C."/>
            <person name="Elosegui-Artola A."/>
            <person name="Kim D.S."/>
            <person name="De Juan-Pardo E."/>
            <person name="Demeyer K."/>
            <person name="Hole K."/>
            <person name="Larrea E."/>
            <person name="Timmerman E."/>
            <person name="Prieto J."/>
            <person name="Arnesen T."/>
            <person name="Sherman F."/>
            <person name="Gevaert K."/>
            <person name="Aldabe R."/>
        </authorList>
    </citation>
    <scope>ACETYLATION [LARGE SCALE ANALYSIS] AT ALA-2</scope>
    <scope>CLEAVAGE OF INITIATOR METHIONINE [LARGE SCALE ANALYSIS]</scope>
    <scope>IDENTIFICATION BY MASS SPECTROMETRY [LARGE SCALE ANALYSIS]</scope>
</reference>
<accession>Q7Z388</accession>
<accession>Q6ZW32</accession>
<accession>Q6ZW42</accession>
<accession>Q7Z329</accession>
<comment type="function">
    <text evidence="1">Probable C-mannosyltransferase that mediates C-mannosylation of tryptophan residues on target proteins.</text>
</comment>
<comment type="interaction">
    <interactant intactId="EBI-2871914">
        <id>Q7Z388</id>
    </interactant>
    <interactant intactId="EBI-21505209">
        <id>Q0GE19</id>
        <label>SLC10A7</label>
    </interactant>
    <organismsDiffer>false</organismsDiffer>
    <experiments>3</experiments>
</comment>
<comment type="subcellular location">
    <subcellularLocation>
        <location evidence="5">Membrane</location>
        <topology evidence="5">Multi-pass membrane protein</topology>
    </subcellularLocation>
</comment>
<comment type="tissue specificity">
    <text evidence="4">Widely expressed.</text>
</comment>
<comment type="similarity">
    <text evidence="5">Belongs to the dpy-19 family.</text>
</comment>
<comment type="sequence caution" evidence="5">
    <conflict type="erroneous initiation">
        <sequence resource="EMBL-CDS" id="BAC85664"/>
    </conflict>
</comment>
<sequence>MAEEEGPPVELRQRKKPKSSENKESAKEEKISDIPIPERAPKHVLFQRFAKIFIGCLAAVTSGMMYALYLSAYHERKFWFSNRQELEREITFQGDSAIYYSYYKDMLKAPSFERGVYELTHNNKTVSLKTINAVQQMSLYPELIASILYQATGSNEIIEPVYFYIGIVFGLQGIYVTALFVTSWLMSGTWLAGMLTVAWFVINRVDTTRIEYSIPLRENWALPYFACQIAALTGYLKSNLNTYGERFCYLLMSASTYTFMMMWEYSHYLLFLQAISLFLLDTFSVEQSDKVYEVYKIYIFSLFLGYLLQFENPALLVSPLLSLVAALMLAKCLQLNVKKGSFVAKIIKVINFYLVCTLTITLNIIMKMFVPHKENGHMLKFLEVKFGLNMTKNFTMNWLLCQESLQAPSQDFFLRLTQSSLLPFYILVLIICFLSMLQVIFRRINGKSLKETVTLEDGRIGERPEIIYHVIHTILLGSLAMVIEGLKYIWIPYVCMLAAFGVCSPELWMTLFKWLRLRTVHPILLALILSMAVPTIIGLSLWKEFFPRLMTELMELQEFYDPDTVELMTWIKRQAPVAAVFAGSPQLMGAIKLCTGWMVTSLPLYNDDDLLKRNENIYQIYSKRSAEDIYKILTSYKANYLIVEDAICNEVGPMRGCRVKDLLDIANGHMVCEEGDKLTYSKYGRFCHEVKINYSPYVNYFTRVYWNRSYFVYKINTVISFQS</sequence>
<feature type="initiator methionine" description="Removed" evidence="6">
    <location>
        <position position="1"/>
    </location>
</feature>
<feature type="chain" id="PRO_0000311881" description="Probable C-mannosyltransferase DPY19L4">
    <location>
        <begin position="2"/>
        <end position="723"/>
    </location>
</feature>
<feature type="transmembrane region" description="Helical" evidence="2">
    <location>
        <begin position="52"/>
        <end position="72"/>
    </location>
</feature>
<feature type="transmembrane region" description="Helical" evidence="2">
    <location>
        <begin position="161"/>
        <end position="178"/>
    </location>
</feature>
<feature type="transmembrane region" description="Helical" evidence="2">
    <location>
        <begin position="184"/>
        <end position="202"/>
    </location>
</feature>
<feature type="transmembrane region" description="Helical" evidence="2">
    <location>
        <begin position="222"/>
        <end position="240"/>
    </location>
</feature>
<feature type="transmembrane region" description="Helical" evidence="2">
    <location>
        <begin position="260"/>
        <end position="280"/>
    </location>
</feature>
<feature type="transmembrane region" description="Helical" evidence="2">
    <location>
        <begin position="292"/>
        <end position="310"/>
    </location>
</feature>
<feature type="transmembrane region" description="Helical" evidence="2">
    <location>
        <begin position="316"/>
        <end position="337"/>
    </location>
</feature>
<feature type="transmembrane region" description="Helical" evidence="2">
    <location>
        <begin position="349"/>
        <end position="370"/>
    </location>
</feature>
<feature type="transmembrane region" description="Helical" evidence="2">
    <location>
        <begin position="421"/>
        <end position="441"/>
    </location>
</feature>
<feature type="transmembrane region" description="Helical" evidence="2">
    <location>
        <begin position="466"/>
        <end position="486"/>
    </location>
</feature>
<feature type="transmembrane region" description="Helical" evidence="2">
    <location>
        <begin position="489"/>
        <end position="509"/>
    </location>
</feature>
<feature type="transmembrane region" description="Helical" evidence="2">
    <location>
        <begin position="522"/>
        <end position="542"/>
    </location>
</feature>
<feature type="region of interest" description="Disordered" evidence="3">
    <location>
        <begin position="1"/>
        <end position="33"/>
    </location>
</feature>
<feature type="compositionally biased region" description="Basic and acidic residues" evidence="3">
    <location>
        <begin position="18"/>
        <end position="32"/>
    </location>
</feature>
<feature type="modified residue" description="N-acetylalanine" evidence="6">
    <location>
        <position position="2"/>
    </location>
</feature>
<feature type="sequence conflict" description="In Ref. 2; CAD98049." evidence="5" ref="2">
    <original>E</original>
    <variation>D</variation>
    <location>
        <position position="3"/>
    </location>
</feature>
<feature type="sequence conflict" description="In Ref. 1; BAC85664." evidence="5" ref="1">
    <original>I</original>
    <variation>T</variation>
    <location>
        <position position="440"/>
    </location>
</feature>
<feature type="sequence conflict" description="In Ref. 1; BAC85675." evidence="5" ref="1">
    <original>M</original>
    <variation>T</variation>
    <location>
        <position position="654"/>
    </location>
</feature>
<gene>
    <name type="primary">DPY19L4</name>
</gene>